<sequence length="295" mass="31897">MTSTEWRTGLTGAQQAEIRALIDAATTHDGVAPVGDQVLRELGRDRTRHLLTTDDDRVVGYLNLAPAEGDDPAMAELVVHPQARRRGIGAAMARTALAEGGPGARIWAHGNIAAAQAMASSLRLVVVRELLQMRRPLTDLPPVPDTPGVRIATYAGPGDDAEILRVNNAAFSWHPEQGGWTEHEIDERRNEGWFDPEGLFQAFDEQTGSLLGFHWTKIHDASLGEVYVVGVDPQAQGRGLGYTLTLIGLHHLAEKLAGPEPTVLLYVEADNSAAVNTYRKLGFEVFSVDAAYAAN</sequence>
<gene>
    <name type="primary">mshD</name>
    <name type="ordered locus">MSMEG_5783</name>
    <name type="ordered locus">MSMEI_5630</name>
    <name type="ORF">MSMEG5754</name>
</gene>
<dbReference type="EC" id="2.3.1.189"/>
<dbReference type="EMBL" id="DQ866865">
    <property type="protein sequence ID" value="ABJ96326.1"/>
    <property type="molecule type" value="Genomic_DNA"/>
</dbReference>
<dbReference type="EMBL" id="CP000480">
    <property type="status" value="NOT_ANNOTATED_CDS"/>
    <property type="molecule type" value="Genomic_DNA"/>
</dbReference>
<dbReference type="EMBL" id="CP001663">
    <property type="protein sequence ID" value="AFP42065.1"/>
    <property type="molecule type" value="Genomic_DNA"/>
</dbReference>
<dbReference type="RefSeq" id="WP_014878453.1">
    <property type="nucleotide sequence ID" value="NZ_SIJM01000007.1"/>
</dbReference>
<dbReference type="SMR" id="A4ZHT6"/>
<dbReference type="PaxDb" id="246196-MSMEI_5630"/>
<dbReference type="GeneID" id="93460423"/>
<dbReference type="KEGG" id="msb:LJ00_28595"/>
<dbReference type="KEGG" id="msg:MSMEI_5630"/>
<dbReference type="PATRIC" id="fig|246196.56.peg.5750"/>
<dbReference type="eggNOG" id="COG0456">
    <property type="taxonomic scope" value="Bacteria"/>
</dbReference>
<dbReference type="Proteomes" id="UP000000757">
    <property type="component" value="Chromosome"/>
</dbReference>
<dbReference type="Proteomes" id="UP000006158">
    <property type="component" value="Chromosome"/>
</dbReference>
<dbReference type="GO" id="GO:0035447">
    <property type="term" value="F:mycothiol synthase activity"/>
    <property type="evidence" value="ECO:0007669"/>
    <property type="project" value="UniProtKB-UniRule"/>
</dbReference>
<dbReference type="GO" id="GO:0008999">
    <property type="term" value="F:protein-N-terminal-alanine acetyltransferase activity"/>
    <property type="evidence" value="ECO:0007669"/>
    <property type="project" value="TreeGrafter"/>
</dbReference>
<dbReference type="GO" id="GO:0010125">
    <property type="term" value="P:mycothiol biosynthetic process"/>
    <property type="evidence" value="ECO:0007669"/>
    <property type="project" value="UniProtKB-UniRule"/>
</dbReference>
<dbReference type="CDD" id="cd04301">
    <property type="entry name" value="NAT_SF"/>
    <property type="match status" value="1"/>
</dbReference>
<dbReference type="Gene3D" id="3.40.630.30">
    <property type="match status" value="1"/>
</dbReference>
<dbReference type="HAMAP" id="MF_01698">
    <property type="entry name" value="MshD"/>
    <property type="match status" value="1"/>
</dbReference>
<dbReference type="InterPro" id="IPR016181">
    <property type="entry name" value="Acyl_CoA_acyltransferase"/>
</dbReference>
<dbReference type="InterPro" id="IPR000182">
    <property type="entry name" value="GNAT_dom"/>
</dbReference>
<dbReference type="InterPro" id="IPR050276">
    <property type="entry name" value="MshD_Acetyltransferase"/>
</dbReference>
<dbReference type="InterPro" id="IPR017813">
    <property type="entry name" value="Mycothiol_AcTrfase"/>
</dbReference>
<dbReference type="NCBIfam" id="TIGR03448">
    <property type="entry name" value="mycothiol_MshD"/>
    <property type="match status" value="1"/>
</dbReference>
<dbReference type="PANTHER" id="PTHR43617">
    <property type="entry name" value="L-AMINO ACID N-ACETYLTRANSFERASE"/>
    <property type="match status" value="1"/>
</dbReference>
<dbReference type="PANTHER" id="PTHR43617:SF31">
    <property type="entry name" value="MYCOTHIOL ACETYLTRANSFERASE"/>
    <property type="match status" value="1"/>
</dbReference>
<dbReference type="Pfam" id="PF00583">
    <property type="entry name" value="Acetyltransf_1"/>
    <property type="match status" value="2"/>
</dbReference>
<dbReference type="PIRSF" id="PIRSF021524">
    <property type="entry name" value="MSH_acetyltransferase"/>
    <property type="match status" value="1"/>
</dbReference>
<dbReference type="SUPFAM" id="SSF55729">
    <property type="entry name" value="Acyl-CoA N-acyltransferases (Nat)"/>
    <property type="match status" value="1"/>
</dbReference>
<dbReference type="PROSITE" id="PS51186">
    <property type="entry name" value="GNAT"/>
    <property type="match status" value="2"/>
</dbReference>
<comment type="function">
    <text evidence="3">Catalyzes the transfer of acetyl from acetyl-CoA to desacetylmycothiol (Cys-GlcN-Ins) to form mycothiol.</text>
</comment>
<comment type="catalytic activity">
    <reaction>
        <text>1D-myo-inositol 2-(L-cysteinylamino)-2-deoxy-alpha-D-glucopyranoside + acetyl-CoA = mycothiol + CoA + H(+)</text>
        <dbReference type="Rhea" id="RHEA:26172"/>
        <dbReference type="ChEBI" id="CHEBI:15378"/>
        <dbReference type="ChEBI" id="CHEBI:16768"/>
        <dbReference type="ChEBI" id="CHEBI:57287"/>
        <dbReference type="ChEBI" id="CHEBI:57288"/>
        <dbReference type="ChEBI" id="CHEBI:58887"/>
        <dbReference type="EC" id="2.3.1.189"/>
    </reaction>
</comment>
<comment type="subunit">
    <text evidence="1">Monomer.</text>
</comment>
<comment type="similarity">
    <text evidence="2">Belongs to the acetyltransferase family. MshD subfamily.</text>
</comment>
<comment type="sequence caution" evidence="2">
    <conflict type="frameshift">
        <sequence resource="EMBL" id="CP000480"/>
    </conflict>
</comment>
<feature type="chain" id="PRO_0000399829" description="Mycothiol acetyltransferase">
    <location>
        <begin position="1"/>
        <end position="295"/>
    </location>
</feature>
<feature type="domain" description="N-acetyltransferase 1">
    <location>
        <begin position="4"/>
        <end position="138"/>
    </location>
</feature>
<feature type="domain" description="N-acetyltransferase 2">
    <location>
        <begin position="149"/>
        <end position="295"/>
    </location>
</feature>
<feature type="binding site" evidence="1">
    <location>
        <position position="36"/>
    </location>
    <ligand>
        <name>1D-myo-inositol 2-(L-cysteinylamino)-2-deoxy-alpha-D-glucopyranoside</name>
        <dbReference type="ChEBI" id="CHEBI:58887"/>
    </ligand>
</feature>
<feature type="binding site" evidence="1">
    <location>
        <begin position="77"/>
        <end position="79"/>
    </location>
    <ligand>
        <name>acetyl-CoA</name>
        <dbReference type="ChEBI" id="CHEBI:57288"/>
        <label>1</label>
    </ligand>
</feature>
<feature type="binding site" evidence="1">
    <location>
        <begin position="85"/>
        <end position="90"/>
    </location>
    <ligand>
        <name>acetyl-CoA</name>
        <dbReference type="ChEBI" id="CHEBI:57288"/>
        <label>1</label>
    </ligand>
</feature>
<feature type="binding site" evidence="1">
    <location>
        <position position="176"/>
    </location>
    <ligand>
        <name>1D-myo-inositol 2-(L-cysteinylamino)-2-deoxy-alpha-D-glucopyranoside</name>
        <dbReference type="ChEBI" id="CHEBI:58887"/>
    </ligand>
</feature>
<feature type="binding site" evidence="1">
    <location>
        <position position="217"/>
    </location>
    <ligand>
        <name>1D-myo-inositol 2-(L-cysteinylamino)-2-deoxy-alpha-D-glucopyranoside</name>
        <dbReference type="ChEBI" id="CHEBI:58887"/>
    </ligand>
</feature>
<feature type="binding site" evidence="1">
    <location>
        <position position="225"/>
    </location>
    <ligand>
        <name>1D-myo-inositol 2-(L-cysteinylamino)-2-deoxy-alpha-D-glucopyranoside</name>
        <dbReference type="ChEBI" id="CHEBI:58887"/>
    </ligand>
</feature>
<feature type="binding site" evidence="1">
    <location>
        <begin position="229"/>
        <end position="231"/>
    </location>
    <ligand>
        <name>acetyl-CoA</name>
        <dbReference type="ChEBI" id="CHEBI:57288"/>
        <label>2</label>
    </ligand>
</feature>
<feature type="binding site" evidence="1">
    <location>
        <begin position="236"/>
        <end position="242"/>
    </location>
    <ligand>
        <name>acetyl-CoA</name>
        <dbReference type="ChEBI" id="CHEBI:57288"/>
        <label>2</label>
    </ligand>
</feature>
<feature type="binding site" evidence="1">
    <location>
        <position position="266"/>
    </location>
    <ligand>
        <name>1D-myo-inositol 2-(L-cysteinylamino)-2-deoxy-alpha-D-glucopyranoside</name>
        <dbReference type="ChEBI" id="CHEBI:58887"/>
    </ligand>
</feature>
<feature type="binding site" evidence="1">
    <location>
        <begin position="271"/>
        <end position="276"/>
    </location>
    <ligand>
        <name>acetyl-CoA</name>
        <dbReference type="ChEBI" id="CHEBI:57288"/>
        <label>2</label>
    </ligand>
</feature>
<proteinExistence type="inferred from homology"/>
<protein>
    <recommendedName>
        <fullName>Mycothiol acetyltransferase</fullName>
        <shortName>MSH acetyltransferase</shortName>
        <ecNumber>2.3.1.189</ecNumber>
    </recommendedName>
    <alternativeName>
        <fullName>Mycothiol synthase</fullName>
    </alternativeName>
</protein>
<organism>
    <name type="scientific">Mycolicibacterium smegmatis (strain ATCC 700084 / mc(2)155)</name>
    <name type="common">Mycobacterium smegmatis</name>
    <dbReference type="NCBI Taxonomy" id="246196"/>
    <lineage>
        <taxon>Bacteria</taxon>
        <taxon>Bacillati</taxon>
        <taxon>Actinomycetota</taxon>
        <taxon>Actinomycetes</taxon>
        <taxon>Mycobacteriales</taxon>
        <taxon>Mycobacteriaceae</taxon>
        <taxon>Mycolicibacterium</taxon>
    </lineage>
</organism>
<name>MSHD_MYCS2</name>
<accession>A4ZHT6</accession>
<accession>I7FL88</accession>
<evidence type="ECO:0000250" key="1"/>
<evidence type="ECO:0000305" key="2"/>
<evidence type="ECO:0000305" key="3">
    <source>
    </source>
</evidence>
<reference key="1">
    <citation type="submission" date="2006-10" db="EMBL/GenBank/DDBJ databases">
        <authorList>
            <person name="Fleischmann R.D."/>
            <person name="Dodson R.J."/>
            <person name="Haft D.H."/>
            <person name="Merkel J.S."/>
            <person name="Nelson W.C."/>
            <person name="Fraser C.M."/>
        </authorList>
    </citation>
    <scope>NUCLEOTIDE SEQUENCE [LARGE SCALE GENOMIC DNA]</scope>
    <source>
        <strain>ATCC 700084 / mc(2)155</strain>
    </source>
</reference>
<reference key="2">
    <citation type="journal article" date="2007" name="Genome Biol.">
        <title>Interrupted coding sequences in Mycobacterium smegmatis: authentic mutations or sequencing errors?</title>
        <authorList>
            <person name="Deshayes C."/>
            <person name="Perrodou E."/>
            <person name="Gallien S."/>
            <person name="Euphrasie D."/>
            <person name="Schaeffer C."/>
            <person name="Van-Dorsselaer A."/>
            <person name="Poch O."/>
            <person name="Lecompte O."/>
            <person name="Reyrat J.-M."/>
        </authorList>
    </citation>
    <scope>NUCLEOTIDE SEQUENCE [LARGE SCALE GENOMIC DNA]</scope>
    <source>
        <strain>ATCC 700084 / mc(2)155</strain>
    </source>
</reference>
<reference key="3">
    <citation type="journal article" date="2009" name="Genome Res.">
        <title>Ortho-proteogenomics: multiple proteomes investigation through orthology and a new MS-based protocol.</title>
        <authorList>
            <person name="Gallien S."/>
            <person name="Perrodou E."/>
            <person name="Carapito C."/>
            <person name="Deshayes C."/>
            <person name="Reyrat J.-M."/>
            <person name="Van Dorsselaer A."/>
            <person name="Poch O."/>
            <person name="Schaeffer C."/>
            <person name="Lecompte O."/>
        </authorList>
    </citation>
    <scope>NUCLEOTIDE SEQUENCE [LARGE SCALE GENOMIC DNA]</scope>
    <source>
        <strain>ATCC 700084 / mc(2)155</strain>
    </source>
</reference>
<reference key="4">
    <citation type="journal article" date="2002" name="Arch. Microbiol.">
        <title>Identification of the mycothiol synthase gene (mshD) encoding the acetyltransferase producing mycothiol in actinomycetes.</title>
        <authorList>
            <person name="Koledin T."/>
            <person name="Newton G.L."/>
            <person name="Fahey R.C."/>
        </authorList>
    </citation>
    <scope>FUNCTION</scope>
</reference>
<keyword id="KW-0012">Acyltransferase</keyword>
<keyword id="KW-1185">Reference proteome</keyword>
<keyword id="KW-0677">Repeat</keyword>
<keyword id="KW-0808">Transferase</keyword>